<dbReference type="EMBL" id="AE016822">
    <property type="protein sequence ID" value="AAT90125.1"/>
    <property type="molecule type" value="Genomic_DNA"/>
</dbReference>
<dbReference type="RefSeq" id="WP_011187104.1">
    <property type="nucleotide sequence ID" value="NC_006087.1"/>
</dbReference>
<dbReference type="SMR" id="Q6ABW7"/>
<dbReference type="STRING" id="281090.Lxx25180"/>
<dbReference type="KEGG" id="lxx:Lxx25180"/>
<dbReference type="eggNOG" id="COG0360">
    <property type="taxonomic scope" value="Bacteria"/>
</dbReference>
<dbReference type="HOGENOM" id="CLU_113441_5_2_11"/>
<dbReference type="Proteomes" id="UP000001306">
    <property type="component" value="Chromosome"/>
</dbReference>
<dbReference type="GO" id="GO:0005737">
    <property type="term" value="C:cytoplasm"/>
    <property type="evidence" value="ECO:0007669"/>
    <property type="project" value="UniProtKB-ARBA"/>
</dbReference>
<dbReference type="GO" id="GO:1990904">
    <property type="term" value="C:ribonucleoprotein complex"/>
    <property type="evidence" value="ECO:0007669"/>
    <property type="project" value="UniProtKB-KW"/>
</dbReference>
<dbReference type="GO" id="GO:0005840">
    <property type="term" value="C:ribosome"/>
    <property type="evidence" value="ECO:0007669"/>
    <property type="project" value="UniProtKB-KW"/>
</dbReference>
<dbReference type="GO" id="GO:0070181">
    <property type="term" value="F:small ribosomal subunit rRNA binding"/>
    <property type="evidence" value="ECO:0007669"/>
    <property type="project" value="TreeGrafter"/>
</dbReference>
<dbReference type="GO" id="GO:0003735">
    <property type="term" value="F:structural constituent of ribosome"/>
    <property type="evidence" value="ECO:0007669"/>
    <property type="project" value="InterPro"/>
</dbReference>
<dbReference type="GO" id="GO:0006412">
    <property type="term" value="P:translation"/>
    <property type="evidence" value="ECO:0007669"/>
    <property type="project" value="UniProtKB-UniRule"/>
</dbReference>
<dbReference type="CDD" id="cd00473">
    <property type="entry name" value="bS6"/>
    <property type="match status" value="1"/>
</dbReference>
<dbReference type="FunFam" id="3.30.70.60:FF:000002">
    <property type="entry name" value="30S ribosomal protein S6"/>
    <property type="match status" value="1"/>
</dbReference>
<dbReference type="Gene3D" id="3.30.70.60">
    <property type="match status" value="1"/>
</dbReference>
<dbReference type="HAMAP" id="MF_00360">
    <property type="entry name" value="Ribosomal_bS6"/>
    <property type="match status" value="1"/>
</dbReference>
<dbReference type="InterPro" id="IPR000529">
    <property type="entry name" value="Ribosomal_bS6"/>
</dbReference>
<dbReference type="InterPro" id="IPR020815">
    <property type="entry name" value="Ribosomal_bS6_CS"/>
</dbReference>
<dbReference type="InterPro" id="IPR035980">
    <property type="entry name" value="Ribosomal_bS6_sf"/>
</dbReference>
<dbReference type="InterPro" id="IPR020814">
    <property type="entry name" value="Ribosomal_S6_plastid/chlpt"/>
</dbReference>
<dbReference type="InterPro" id="IPR014717">
    <property type="entry name" value="Transl_elong_EF1B/ribsomal_bS6"/>
</dbReference>
<dbReference type="NCBIfam" id="TIGR00166">
    <property type="entry name" value="S6"/>
    <property type="match status" value="1"/>
</dbReference>
<dbReference type="PANTHER" id="PTHR21011">
    <property type="entry name" value="MITOCHONDRIAL 28S RIBOSOMAL PROTEIN S6"/>
    <property type="match status" value="1"/>
</dbReference>
<dbReference type="PANTHER" id="PTHR21011:SF1">
    <property type="entry name" value="SMALL RIBOSOMAL SUBUNIT PROTEIN BS6M"/>
    <property type="match status" value="1"/>
</dbReference>
<dbReference type="Pfam" id="PF01250">
    <property type="entry name" value="Ribosomal_S6"/>
    <property type="match status" value="1"/>
</dbReference>
<dbReference type="SUPFAM" id="SSF54995">
    <property type="entry name" value="Ribosomal protein S6"/>
    <property type="match status" value="1"/>
</dbReference>
<dbReference type="PROSITE" id="PS01048">
    <property type="entry name" value="RIBOSOMAL_S6"/>
    <property type="match status" value="1"/>
</dbReference>
<organism>
    <name type="scientific">Leifsonia xyli subsp. xyli (strain CTCB07)</name>
    <dbReference type="NCBI Taxonomy" id="281090"/>
    <lineage>
        <taxon>Bacteria</taxon>
        <taxon>Bacillati</taxon>
        <taxon>Actinomycetota</taxon>
        <taxon>Actinomycetes</taxon>
        <taxon>Micrococcales</taxon>
        <taxon>Microbacteriaceae</taxon>
        <taxon>Leifsonia</taxon>
    </lineage>
</organism>
<protein>
    <recommendedName>
        <fullName evidence="1">Small ribosomal subunit protein bS6</fullName>
    </recommendedName>
    <alternativeName>
        <fullName evidence="2">30S ribosomal protein S6</fullName>
    </alternativeName>
</protein>
<gene>
    <name evidence="1" type="primary">rpsF</name>
    <name type="ordered locus">Lxx25180</name>
</gene>
<name>RS6_LEIXX</name>
<evidence type="ECO:0000255" key="1">
    <source>
        <dbReference type="HAMAP-Rule" id="MF_00360"/>
    </source>
</evidence>
<evidence type="ECO:0000305" key="2"/>
<proteinExistence type="inferred from homology"/>
<accession>Q6ABW7</accession>
<feature type="chain" id="PRO_0000176785" description="Small ribosomal subunit protein bS6">
    <location>
        <begin position="1"/>
        <end position="128"/>
    </location>
</feature>
<reference key="1">
    <citation type="journal article" date="2004" name="Mol. Plant Microbe Interact.">
        <title>The genome sequence of the Gram-positive sugarcane pathogen Leifsonia xyli subsp. xyli.</title>
        <authorList>
            <person name="Monteiro-Vitorello C.B."/>
            <person name="Camargo L.E.A."/>
            <person name="Van Sluys M.A."/>
            <person name="Kitajima J.P."/>
            <person name="Truffi D."/>
            <person name="do Amaral A.M."/>
            <person name="Harakava R."/>
            <person name="de Oliveira J.C.F."/>
            <person name="Wood D."/>
            <person name="de Oliveira M.C."/>
            <person name="Miyaki C.Y."/>
            <person name="Takita M.A."/>
            <person name="da Silva A.C.R."/>
            <person name="Furlan L.R."/>
            <person name="Carraro D.M."/>
            <person name="Camarotte G."/>
            <person name="Almeida N.F. Jr."/>
            <person name="Carrer H."/>
            <person name="Coutinho L.L."/>
            <person name="El-Dorry H.A."/>
            <person name="Ferro M.I.T."/>
            <person name="Gagliardi P.R."/>
            <person name="Giglioti E."/>
            <person name="Goldman M.H.S."/>
            <person name="Goldman G.H."/>
            <person name="Kimura E.T."/>
            <person name="Ferro E.S."/>
            <person name="Kuramae E.E."/>
            <person name="Lemos E.G.M."/>
            <person name="Lemos M.V.F."/>
            <person name="Mauro S.M.Z."/>
            <person name="Machado M.A."/>
            <person name="Marino C.L."/>
            <person name="Menck C.F."/>
            <person name="Nunes L.R."/>
            <person name="Oliveira R.C."/>
            <person name="Pereira G.G."/>
            <person name="Siqueira W."/>
            <person name="de Souza A.A."/>
            <person name="Tsai S.M."/>
            <person name="Zanca A.S."/>
            <person name="Simpson A.J.G."/>
            <person name="Brumbley S.M."/>
            <person name="Setubal J.C."/>
        </authorList>
    </citation>
    <scope>NUCLEOTIDE SEQUENCE [LARGE SCALE GENOMIC DNA]</scope>
    <source>
        <strain>CTCB07</strain>
    </source>
</reference>
<keyword id="KW-1185">Reference proteome</keyword>
<keyword id="KW-0687">Ribonucleoprotein</keyword>
<keyword id="KW-0689">Ribosomal protein</keyword>
<keyword id="KW-0694">RNA-binding</keyword>
<keyword id="KW-0699">rRNA-binding</keyword>
<sequence length="128" mass="14211">MHQYELMVILDPEIDERTVAPSLDKFLNVVRNDGGTIDNVDIWGRRRLAYEINKKSEGIYAVVQLTATGDTTKELDRQLKLSEAVMRTKVLRADEAIAQVAAAQKRADEKAARKAAAAEKTVTEKVGV</sequence>
<comment type="function">
    <text evidence="1">Binds together with bS18 to 16S ribosomal RNA.</text>
</comment>
<comment type="similarity">
    <text evidence="1">Belongs to the bacterial ribosomal protein bS6 family.</text>
</comment>